<keyword id="KW-0028">Amino-acid biosynthesis</keyword>
<keyword id="KW-0963">Cytoplasm</keyword>
<keyword id="KW-0521">NADP</keyword>
<keyword id="KW-0560">Oxidoreductase</keyword>
<keyword id="KW-0641">Proline biosynthesis</keyword>
<organism>
    <name type="scientific">Chlorobium phaeovibrioides (strain DSM 265 / 1930)</name>
    <name type="common">Prosthecochloris vibrioformis (strain DSM 265)</name>
    <dbReference type="NCBI Taxonomy" id="290318"/>
    <lineage>
        <taxon>Bacteria</taxon>
        <taxon>Pseudomonadati</taxon>
        <taxon>Chlorobiota</taxon>
        <taxon>Chlorobiia</taxon>
        <taxon>Chlorobiales</taxon>
        <taxon>Chlorobiaceae</taxon>
        <taxon>Chlorobium/Pelodictyon group</taxon>
        <taxon>Chlorobium</taxon>
    </lineage>
</organism>
<feature type="chain" id="PRO_0000340907" description="Gamma-glutamyl phosphate reductase">
    <location>
        <begin position="1"/>
        <end position="422"/>
    </location>
</feature>
<protein>
    <recommendedName>
        <fullName evidence="1">Gamma-glutamyl phosphate reductase</fullName>
        <shortName evidence="1">GPR</shortName>
        <ecNumber evidence="1">1.2.1.41</ecNumber>
    </recommendedName>
    <alternativeName>
        <fullName evidence="1">Glutamate-5-semialdehyde dehydrogenase</fullName>
    </alternativeName>
    <alternativeName>
        <fullName evidence="1">Glutamyl-gamma-semialdehyde dehydrogenase</fullName>
        <shortName evidence="1">GSA dehydrogenase</shortName>
    </alternativeName>
</protein>
<sequence length="422" mass="46155">MSMNLKETIILKLDEVRTASRTLVTLTDSTINEVLLDLAGRIAPNAAAILEANRSDLERMERSSPMYDRLLLNEKRLEGIAADIRNVASLPSPLDMTLEERTLENGLRLRKASVPMGVIGIIYEARPNVTFDVFALSLKSGNATVLKGGSDADASNRAIVELIHSVLSDHNLSPDTLYLLPSEREAATVMMGAVGKIDMIIPRGSQALINHVRNTAKVPVIETGAGIVHTYFDKSGELEMGKEIVLNAKTRRPSVCNALDTLIIHSERLGDLSELCRPLAEHQVIIFADERAYLSLLASYPEQLLQHAEPEHFGTEFLSLKLSVKTVDTLDDALEHIAAYSSQHSEAVITEDPAVKAEFFKRVDAAVVYANTSTAFTDGAQFGLGAEIGISTQKLHARGPMALRELTTYKWMIEGDGQTRPA</sequence>
<gene>
    <name evidence="1" type="primary">proA</name>
    <name type="ordered locus">Cvib_1295</name>
</gene>
<evidence type="ECO:0000255" key="1">
    <source>
        <dbReference type="HAMAP-Rule" id="MF_00412"/>
    </source>
</evidence>
<proteinExistence type="inferred from homology"/>
<dbReference type="EC" id="1.2.1.41" evidence="1"/>
<dbReference type="EMBL" id="CP000607">
    <property type="protein sequence ID" value="ABP37307.1"/>
    <property type="molecule type" value="Genomic_DNA"/>
</dbReference>
<dbReference type="SMR" id="A4SFP8"/>
<dbReference type="STRING" id="290318.Cvib_1295"/>
<dbReference type="KEGG" id="pvi:Cvib_1295"/>
<dbReference type="eggNOG" id="COG0014">
    <property type="taxonomic scope" value="Bacteria"/>
</dbReference>
<dbReference type="HOGENOM" id="CLU_030231_0_0_10"/>
<dbReference type="OrthoDB" id="9809970at2"/>
<dbReference type="UniPathway" id="UPA00098">
    <property type="reaction ID" value="UER00360"/>
</dbReference>
<dbReference type="GO" id="GO:0005737">
    <property type="term" value="C:cytoplasm"/>
    <property type="evidence" value="ECO:0007669"/>
    <property type="project" value="UniProtKB-SubCell"/>
</dbReference>
<dbReference type="GO" id="GO:0004350">
    <property type="term" value="F:glutamate-5-semialdehyde dehydrogenase activity"/>
    <property type="evidence" value="ECO:0007669"/>
    <property type="project" value="UniProtKB-UniRule"/>
</dbReference>
<dbReference type="GO" id="GO:0050661">
    <property type="term" value="F:NADP binding"/>
    <property type="evidence" value="ECO:0007669"/>
    <property type="project" value="InterPro"/>
</dbReference>
<dbReference type="GO" id="GO:0055129">
    <property type="term" value="P:L-proline biosynthetic process"/>
    <property type="evidence" value="ECO:0007669"/>
    <property type="project" value="UniProtKB-UniRule"/>
</dbReference>
<dbReference type="CDD" id="cd07079">
    <property type="entry name" value="ALDH_F18-19_ProA-GPR"/>
    <property type="match status" value="1"/>
</dbReference>
<dbReference type="Gene3D" id="3.40.605.10">
    <property type="entry name" value="Aldehyde Dehydrogenase, Chain A, domain 1"/>
    <property type="match status" value="1"/>
</dbReference>
<dbReference type="Gene3D" id="3.40.309.10">
    <property type="entry name" value="Aldehyde Dehydrogenase, Chain A, domain 2"/>
    <property type="match status" value="1"/>
</dbReference>
<dbReference type="HAMAP" id="MF_00412">
    <property type="entry name" value="ProA"/>
    <property type="match status" value="1"/>
</dbReference>
<dbReference type="InterPro" id="IPR016161">
    <property type="entry name" value="Ald_DH/histidinol_DH"/>
</dbReference>
<dbReference type="InterPro" id="IPR016163">
    <property type="entry name" value="Ald_DH_C"/>
</dbReference>
<dbReference type="InterPro" id="IPR016162">
    <property type="entry name" value="Ald_DH_N"/>
</dbReference>
<dbReference type="InterPro" id="IPR020593">
    <property type="entry name" value="G-glutamylP_reductase_CS"/>
</dbReference>
<dbReference type="InterPro" id="IPR012134">
    <property type="entry name" value="Glu-5-SA_DH"/>
</dbReference>
<dbReference type="InterPro" id="IPR000965">
    <property type="entry name" value="GPR_dom"/>
</dbReference>
<dbReference type="NCBIfam" id="NF001221">
    <property type="entry name" value="PRK00197.1"/>
    <property type="match status" value="1"/>
</dbReference>
<dbReference type="NCBIfam" id="TIGR00407">
    <property type="entry name" value="proA"/>
    <property type="match status" value="1"/>
</dbReference>
<dbReference type="PANTHER" id="PTHR11063:SF8">
    <property type="entry name" value="DELTA-1-PYRROLINE-5-CARBOXYLATE SYNTHASE"/>
    <property type="match status" value="1"/>
</dbReference>
<dbReference type="PANTHER" id="PTHR11063">
    <property type="entry name" value="GLUTAMATE SEMIALDEHYDE DEHYDROGENASE"/>
    <property type="match status" value="1"/>
</dbReference>
<dbReference type="PIRSF" id="PIRSF000151">
    <property type="entry name" value="GPR"/>
    <property type="match status" value="1"/>
</dbReference>
<dbReference type="SUPFAM" id="SSF53720">
    <property type="entry name" value="ALDH-like"/>
    <property type="match status" value="1"/>
</dbReference>
<dbReference type="PROSITE" id="PS01223">
    <property type="entry name" value="PROA"/>
    <property type="match status" value="1"/>
</dbReference>
<name>PROA_CHLPM</name>
<comment type="function">
    <text evidence="1">Catalyzes the NADPH-dependent reduction of L-glutamate 5-phosphate into L-glutamate 5-semialdehyde and phosphate. The product spontaneously undergoes cyclization to form 1-pyrroline-5-carboxylate.</text>
</comment>
<comment type="catalytic activity">
    <reaction evidence="1">
        <text>L-glutamate 5-semialdehyde + phosphate + NADP(+) = L-glutamyl 5-phosphate + NADPH + H(+)</text>
        <dbReference type="Rhea" id="RHEA:19541"/>
        <dbReference type="ChEBI" id="CHEBI:15378"/>
        <dbReference type="ChEBI" id="CHEBI:43474"/>
        <dbReference type="ChEBI" id="CHEBI:57783"/>
        <dbReference type="ChEBI" id="CHEBI:58066"/>
        <dbReference type="ChEBI" id="CHEBI:58274"/>
        <dbReference type="ChEBI" id="CHEBI:58349"/>
        <dbReference type="EC" id="1.2.1.41"/>
    </reaction>
</comment>
<comment type="pathway">
    <text evidence="1">Amino-acid biosynthesis; L-proline biosynthesis; L-glutamate 5-semialdehyde from L-glutamate: step 2/2.</text>
</comment>
<comment type="subcellular location">
    <subcellularLocation>
        <location evidence="1">Cytoplasm</location>
    </subcellularLocation>
</comment>
<comment type="similarity">
    <text evidence="1">Belongs to the gamma-glutamyl phosphate reductase family.</text>
</comment>
<accession>A4SFP8</accession>
<reference key="1">
    <citation type="submission" date="2007-03" db="EMBL/GenBank/DDBJ databases">
        <title>Complete sequence of Prosthecochloris vibrioformis DSM 265.</title>
        <authorList>
            <consortium name="US DOE Joint Genome Institute"/>
            <person name="Copeland A."/>
            <person name="Lucas S."/>
            <person name="Lapidus A."/>
            <person name="Barry K."/>
            <person name="Detter J.C."/>
            <person name="Glavina del Rio T."/>
            <person name="Hammon N."/>
            <person name="Israni S."/>
            <person name="Pitluck S."/>
            <person name="Schmutz J."/>
            <person name="Larimer F."/>
            <person name="Land M."/>
            <person name="Hauser L."/>
            <person name="Mikhailova N."/>
            <person name="Li T."/>
            <person name="Overmann J."/>
            <person name="Schuster S.C."/>
            <person name="Bryant D.A."/>
            <person name="Richardson P."/>
        </authorList>
    </citation>
    <scope>NUCLEOTIDE SEQUENCE [LARGE SCALE GENOMIC DNA]</scope>
    <source>
        <strain>DSM 265 / 1930</strain>
    </source>
</reference>